<sequence length="188" mass="19184">MIKSVIAGAVAMAVVSFGAYAAPTIPQGQGKVTFNGTVVDAPCGIDAQSADQSIDFGQVSKLFLENDGESQPKSFDIKLINCDITNFKKAAGGGGAKTGTVSLTFSGVPSGPQSDMLQTVGATNTAIVVTDPHGKRVKFDGATATGVSYLVDGDNTIHFTAAVRKDGSGNPVTEGAFSAVANFNLTYQ</sequence>
<dbReference type="EMBL" id="AE014075">
    <property type="protein sequence ID" value="AAN82040.1"/>
    <property type="status" value="ALT_INIT"/>
    <property type="molecule type" value="Genomic_DNA"/>
</dbReference>
<dbReference type="RefSeq" id="WP_000597756.1">
    <property type="nucleotide sequence ID" value="NZ_CP051263.1"/>
</dbReference>
<dbReference type="SMR" id="P62608"/>
<dbReference type="STRING" id="199310.c3592"/>
<dbReference type="KEGG" id="ecc:c3592"/>
<dbReference type="eggNOG" id="COG3539">
    <property type="taxonomic scope" value="Bacteria"/>
</dbReference>
<dbReference type="HOGENOM" id="CLU_088965_3_1_6"/>
<dbReference type="Proteomes" id="UP000001410">
    <property type="component" value="Chromosome"/>
</dbReference>
<dbReference type="GO" id="GO:0009289">
    <property type="term" value="C:pilus"/>
    <property type="evidence" value="ECO:0007669"/>
    <property type="project" value="UniProtKB-SubCell"/>
</dbReference>
<dbReference type="GO" id="GO:0043709">
    <property type="term" value="P:cell adhesion involved in single-species biofilm formation"/>
    <property type="evidence" value="ECO:0007669"/>
    <property type="project" value="TreeGrafter"/>
</dbReference>
<dbReference type="Gene3D" id="2.60.40.1090">
    <property type="entry name" value="Fimbrial-type adhesion domain"/>
    <property type="match status" value="1"/>
</dbReference>
<dbReference type="InterPro" id="IPR000259">
    <property type="entry name" value="Adhesion_dom_fimbrial"/>
</dbReference>
<dbReference type="InterPro" id="IPR036937">
    <property type="entry name" value="Adhesion_dom_fimbrial_sf"/>
</dbReference>
<dbReference type="InterPro" id="IPR008966">
    <property type="entry name" value="Adhesion_dom_sf"/>
</dbReference>
<dbReference type="InterPro" id="IPR050263">
    <property type="entry name" value="Bact_Fimbrial_Adh_Pro"/>
</dbReference>
<dbReference type="PANTHER" id="PTHR33420:SF26">
    <property type="entry name" value="FIMBRIAL SUBUNIT"/>
    <property type="match status" value="1"/>
</dbReference>
<dbReference type="PANTHER" id="PTHR33420">
    <property type="entry name" value="FIMBRIAL SUBUNIT ELFA-RELATED"/>
    <property type="match status" value="1"/>
</dbReference>
<dbReference type="Pfam" id="PF00419">
    <property type="entry name" value="Fimbrial"/>
    <property type="match status" value="1"/>
</dbReference>
<dbReference type="SUPFAM" id="SSF49401">
    <property type="entry name" value="Bacterial adhesins"/>
    <property type="match status" value="1"/>
</dbReference>
<keyword id="KW-1015">Disulfide bond</keyword>
<keyword id="KW-0281">Fimbrium</keyword>
<keyword id="KW-1185">Reference proteome</keyword>
<keyword id="KW-0732">Signal</keyword>
<protein>
    <recommendedName>
        <fullName>F7-2 fimbrial protein</fullName>
    </recommendedName>
    <alternativeName>
        <fullName>F7-2 pilin</fullName>
    </alternativeName>
</protein>
<accession>P62608</accession>
<accession>P02972</accession>
<gene>
    <name type="primary">F7-2</name>
    <name type="synonym">papA</name>
    <name type="ordered locus">c3592</name>
</gene>
<proteinExistence type="inferred from homology"/>
<feature type="signal peptide" evidence="1">
    <location>
        <begin position="1"/>
        <end position="21"/>
    </location>
</feature>
<feature type="chain" id="PRO_0000009188" description="F7-2 fimbrial protein">
    <location>
        <begin position="22"/>
        <end position="188"/>
    </location>
</feature>
<feature type="disulfide bond" evidence="2">
    <location>
        <begin position="43"/>
        <end position="82"/>
    </location>
</feature>
<name>FMF2_ECOL6</name>
<reference key="1">
    <citation type="journal article" date="2002" name="Proc. Natl. Acad. Sci. U.S.A.">
        <title>Extensive mosaic structure revealed by the complete genome sequence of uropathogenic Escherichia coli.</title>
        <authorList>
            <person name="Welch R.A."/>
            <person name="Burland V."/>
            <person name="Plunkett G. III"/>
            <person name="Redford P."/>
            <person name="Roesch P."/>
            <person name="Rasko D."/>
            <person name="Buckles E.L."/>
            <person name="Liou S.-R."/>
            <person name="Boutin A."/>
            <person name="Hackett J."/>
            <person name="Stroud D."/>
            <person name="Mayhew G.F."/>
            <person name="Rose D.J."/>
            <person name="Zhou S."/>
            <person name="Schwartz D.C."/>
            <person name="Perna N.T."/>
            <person name="Mobley H.L.T."/>
            <person name="Donnenberg M.S."/>
            <person name="Blattner F.R."/>
        </authorList>
    </citation>
    <scope>NUCLEOTIDE SEQUENCE [LARGE SCALE GENOMIC DNA]</scope>
    <source>
        <strain>CFT073 / ATCC 700928 / UPEC</strain>
    </source>
</reference>
<organism>
    <name type="scientific">Escherichia coli O6:H1 (strain CFT073 / ATCC 700928 / UPEC)</name>
    <dbReference type="NCBI Taxonomy" id="199310"/>
    <lineage>
        <taxon>Bacteria</taxon>
        <taxon>Pseudomonadati</taxon>
        <taxon>Pseudomonadota</taxon>
        <taxon>Gammaproteobacteria</taxon>
        <taxon>Enterobacterales</taxon>
        <taxon>Enterobacteriaceae</taxon>
        <taxon>Escherichia</taxon>
    </lineage>
</organism>
<comment type="function">
    <text evidence="1">Fimbriae (also called pili), polar filaments radiating from the surface of the bacterium to a length of 0.5-1.5 micrometers and numbering 100-300 per cell, enable bacteria to colonize the epithelium of specific host organs.</text>
</comment>
<comment type="subcellular location">
    <subcellularLocation>
        <location>Fimbrium</location>
    </subcellularLocation>
</comment>
<comment type="similarity">
    <text evidence="2">Belongs to the fimbrial protein family.</text>
</comment>
<comment type="sequence caution" evidence="2">
    <conflict type="erroneous initiation">
        <sequence resource="EMBL-CDS" id="AAN82040"/>
    </conflict>
</comment>
<evidence type="ECO:0000250" key="1"/>
<evidence type="ECO:0000305" key="2"/>